<comment type="function">
    <text evidence="1">Involved in the biosynthesis of isopentenyl diphosphate (IPP) and dimethylallyl diphosphate (DMAPP), two major building blocks of isoprenoid compounds. Catalyzes the conversion of 4-diphosphocytidyl-2-C-methyl-D-erythritol 2-phosphate (CDP-ME2P) to 2-C-methyl-D-erythritol 2,4-cyclodiphosphate (ME-CPP) with a corresponding release of cytidine 5-monophosphate (CMP).</text>
</comment>
<comment type="catalytic activity">
    <reaction evidence="1">
        <text>4-CDP-2-C-methyl-D-erythritol 2-phosphate = 2-C-methyl-D-erythritol 2,4-cyclic diphosphate + CMP</text>
        <dbReference type="Rhea" id="RHEA:23864"/>
        <dbReference type="ChEBI" id="CHEBI:57919"/>
        <dbReference type="ChEBI" id="CHEBI:58483"/>
        <dbReference type="ChEBI" id="CHEBI:60377"/>
        <dbReference type="EC" id="4.6.1.12"/>
    </reaction>
</comment>
<comment type="cofactor">
    <cofactor evidence="1">
        <name>a divalent metal cation</name>
        <dbReference type="ChEBI" id="CHEBI:60240"/>
    </cofactor>
    <text evidence="1">Binds 1 divalent metal cation per subunit.</text>
</comment>
<comment type="pathway">
    <text evidence="1">Isoprenoid biosynthesis; isopentenyl diphosphate biosynthesis via DXP pathway; isopentenyl diphosphate from 1-deoxy-D-xylulose 5-phosphate: step 4/6.</text>
</comment>
<comment type="subunit">
    <text evidence="1">Homotrimer.</text>
</comment>
<comment type="similarity">
    <text evidence="1">Belongs to the IspF family.</text>
</comment>
<evidence type="ECO:0000255" key="1">
    <source>
        <dbReference type="HAMAP-Rule" id="MF_00107"/>
    </source>
</evidence>
<gene>
    <name evidence="1" type="primary">ispF</name>
    <name type="ordered locus">CLI_0123</name>
</gene>
<accession>A7G9H1</accession>
<organism>
    <name type="scientific">Clostridium botulinum (strain Langeland / NCTC 10281 / Type F)</name>
    <dbReference type="NCBI Taxonomy" id="441772"/>
    <lineage>
        <taxon>Bacteria</taxon>
        <taxon>Bacillati</taxon>
        <taxon>Bacillota</taxon>
        <taxon>Clostridia</taxon>
        <taxon>Eubacteriales</taxon>
        <taxon>Clostridiaceae</taxon>
        <taxon>Clostridium</taxon>
    </lineage>
</organism>
<proteinExistence type="inferred from homology"/>
<protein>
    <recommendedName>
        <fullName evidence="1">2-C-methyl-D-erythritol 2,4-cyclodiphosphate synthase</fullName>
        <shortName evidence="1">MECDP-synthase</shortName>
        <shortName evidence="1">MECPP-synthase</shortName>
        <shortName evidence="1">MECPS</shortName>
        <ecNumber evidence="1">4.6.1.12</ecNumber>
    </recommendedName>
</protein>
<keyword id="KW-0414">Isoprene biosynthesis</keyword>
<keyword id="KW-0456">Lyase</keyword>
<keyword id="KW-0479">Metal-binding</keyword>
<sequence length="155" mass="16863">MRIGLGYDVHKLVENRPLIIGGVTIPHDKGLLGHSDADVLVHAIMDALLGAAALGDIGKHFPDSDKNFKNISSLLLLSKVKDLINKEGYKIVNIDCTIIAQKPKMLYHIDAMKKNICKCLKLDNNMLNIKATTEEGLGFTGKEEGISANAICLLD</sequence>
<name>ISPF_CLOBL</name>
<reference key="1">
    <citation type="submission" date="2007-06" db="EMBL/GenBank/DDBJ databases">
        <authorList>
            <person name="Brinkac L.M."/>
            <person name="Daugherty S."/>
            <person name="Dodson R.J."/>
            <person name="Madupu R."/>
            <person name="Brown J.L."/>
            <person name="Bruce D."/>
            <person name="Detter C."/>
            <person name="Munk C."/>
            <person name="Smith L.A."/>
            <person name="Smith T.J."/>
            <person name="White O."/>
            <person name="Brettin T.S."/>
        </authorList>
    </citation>
    <scope>NUCLEOTIDE SEQUENCE [LARGE SCALE GENOMIC DNA]</scope>
    <source>
        <strain>Langeland / NCTC 10281 / Type F</strain>
    </source>
</reference>
<dbReference type="EC" id="4.6.1.12" evidence="1"/>
<dbReference type="EMBL" id="CP000728">
    <property type="protein sequence ID" value="ABS40413.1"/>
    <property type="molecule type" value="Genomic_DNA"/>
</dbReference>
<dbReference type="RefSeq" id="WP_011947931.1">
    <property type="nucleotide sequence ID" value="NC_009699.1"/>
</dbReference>
<dbReference type="SMR" id="A7G9H1"/>
<dbReference type="GeneID" id="5184321"/>
<dbReference type="KEGG" id="cbf:CLI_0123"/>
<dbReference type="HOGENOM" id="CLU_084630_2_0_9"/>
<dbReference type="UniPathway" id="UPA00056">
    <property type="reaction ID" value="UER00095"/>
</dbReference>
<dbReference type="Proteomes" id="UP000002410">
    <property type="component" value="Chromosome"/>
</dbReference>
<dbReference type="GO" id="GO:0008685">
    <property type="term" value="F:2-C-methyl-D-erythritol 2,4-cyclodiphosphate synthase activity"/>
    <property type="evidence" value="ECO:0007669"/>
    <property type="project" value="UniProtKB-UniRule"/>
</dbReference>
<dbReference type="GO" id="GO:0046872">
    <property type="term" value="F:metal ion binding"/>
    <property type="evidence" value="ECO:0007669"/>
    <property type="project" value="UniProtKB-KW"/>
</dbReference>
<dbReference type="GO" id="GO:0019288">
    <property type="term" value="P:isopentenyl diphosphate biosynthetic process, methylerythritol 4-phosphate pathway"/>
    <property type="evidence" value="ECO:0007669"/>
    <property type="project" value="UniProtKB-UniRule"/>
</dbReference>
<dbReference type="GO" id="GO:0016114">
    <property type="term" value="P:terpenoid biosynthetic process"/>
    <property type="evidence" value="ECO:0007669"/>
    <property type="project" value="InterPro"/>
</dbReference>
<dbReference type="CDD" id="cd00554">
    <property type="entry name" value="MECDP_synthase"/>
    <property type="match status" value="1"/>
</dbReference>
<dbReference type="FunFam" id="3.30.1330.50:FF:000001">
    <property type="entry name" value="2-C-methyl-D-erythritol 2,4-cyclodiphosphate synthase"/>
    <property type="match status" value="1"/>
</dbReference>
<dbReference type="Gene3D" id="3.30.1330.50">
    <property type="entry name" value="2-C-methyl-D-erythritol 2,4-cyclodiphosphate synthase"/>
    <property type="match status" value="1"/>
</dbReference>
<dbReference type="HAMAP" id="MF_00107">
    <property type="entry name" value="IspF"/>
    <property type="match status" value="1"/>
</dbReference>
<dbReference type="InterPro" id="IPR003526">
    <property type="entry name" value="MECDP_synthase"/>
</dbReference>
<dbReference type="InterPro" id="IPR020555">
    <property type="entry name" value="MECDP_synthase_CS"/>
</dbReference>
<dbReference type="InterPro" id="IPR036571">
    <property type="entry name" value="MECDP_synthase_sf"/>
</dbReference>
<dbReference type="NCBIfam" id="TIGR00151">
    <property type="entry name" value="ispF"/>
    <property type="match status" value="1"/>
</dbReference>
<dbReference type="PANTHER" id="PTHR43181">
    <property type="entry name" value="2-C-METHYL-D-ERYTHRITOL 2,4-CYCLODIPHOSPHATE SYNTHASE, CHLOROPLASTIC"/>
    <property type="match status" value="1"/>
</dbReference>
<dbReference type="PANTHER" id="PTHR43181:SF1">
    <property type="entry name" value="2-C-METHYL-D-ERYTHRITOL 2,4-CYCLODIPHOSPHATE SYNTHASE, CHLOROPLASTIC"/>
    <property type="match status" value="1"/>
</dbReference>
<dbReference type="Pfam" id="PF02542">
    <property type="entry name" value="YgbB"/>
    <property type="match status" value="1"/>
</dbReference>
<dbReference type="SUPFAM" id="SSF69765">
    <property type="entry name" value="IpsF-like"/>
    <property type="match status" value="1"/>
</dbReference>
<dbReference type="PROSITE" id="PS01350">
    <property type="entry name" value="ISPF"/>
    <property type="match status" value="1"/>
</dbReference>
<feature type="chain" id="PRO_1000022825" description="2-C-methyl-D-erythritol 2,4-cyclodiphosphate synthase">
    <location>
        <begin position="1"/>
        <end position="155"/>
    </location>
</feature>
<feature type="binding site" evidence="1">
    <location>
        <begin position="8"/>
        <end position="10"/>
    </location>
    <ligand>
        <name>4-CDP-2-C-methyl-D-erythritol 2-phosphate</name>
        <dbReference type="ChEBI" id="CHEBI:57919"/>
    </ligand>
</feature>
<feature type="binding site" evidence="1">
    <location>
        <position position="8"/>
    </location>
    <ligand>
        <name>a divalent metal cation</name>
        <dbReference type="ChEBI" id="CHEBI:60240"/>
    </ligand>
</feature>
<feature type="binding site" evidence="1">
    <location>
        <position position="10"/>
    </location>
    <ligand>
        <name>a divalent metal cation</name>
        <dbReference type="ChEBI" id="CHEBI:60240"/>
    </ligand>
</feature>
<feature type="binding site" evidence="1">
    <location>
        <begin position="34"/>
        <end position="35"/>
    </location>
    <ligand>
        <name>4-CDP-2-C-methyl-D-erythritol 2-phosphate</name>
        <dbReference type="ChEBI" id="CHEBI:57919"/>
    </ligand>
</feature>
<feature type="binding site" evidence="1">
    <location>
        <position position="42"/>
    </location>
    <ligand>
        <name>a divalent metal cation</name>
        <dbReference type="ChEBI" id="CHEBI:60240"/>
    </ligand>
</feature>
<feature type="binding site" evidence="1">
    <location>
        <begin position="56"/>
        <end position="58"/>
    </location>
    <ligand>
        <name>4-CDP-2-C-methyl-D-erythritol 2-phosphate</name>
        <dbReference type="ChEBI" id="CHEBI:57919"/>
    </ligand>
</feature>
<feature type="binding site" evidence="1">
    <location>
        <begin position="61"/>
        <end position="65"/>
    </location>
    <ligand>
        <name>4-CDP-2-C-methyl-D-erythritol 2-phosphate</name>
        <dbReference type="ChEBI" id="CHEBI:57919"/>
    </ligand>
</feature>
<feature type="binding site" evidence="1">
    <location>
        <begin position="100"/>
        <end position="106"/>
    </location>
    <ligand>
        <name>4-CDP-2-C-methyl-D-erythritol 2-phosphate</name>
        <dbReference type="ChEBI" id="CHEBI:57919"/>
    </ligand>
</feature>
<feature type="binding site" evidence="1">
    <location>
        <begin position="132"/>
        <end position="135"/>
    </location>
    <ligand>
        <name>4-CDP-2-C-methyl-D-erythritol 2-phosphate</name>
        <dbReference type="ChEBI" id="CHEBI:57919"/>
    </ligand>
</feature>
<feature type="binding site" evidence="1">
    <location>
        <position position="139"/>
    </location>
    <ligand>
        <name>4-CDP-2-C-methyl-D-erythritol 2-phosphate</name>
        <dbReference type="ChEBI" id="CHEBI:57919"/>
    </ligand>
</feature>
<feature type="binding site" evidence="1">
    <location>
        <position position="142"/>
    </location>
    <ligand>
        <name>4-CDP-2-C-methyl-D-erythritol 2-phosphate</name>
        <dbReference type="ChEBI" id="CHEBI:57919"/>
    </ligand>
</feature>
<feature type="site" description="Transition state stabilizer" evidence="1">
    <location>
        <position position="34"/>
    </location>
</feature>
<feature type="site" description="Transition state stabilizer" evidence="1">
    <location>
        <position position="133"/>
    </location>
</feature>